<feature type="chain" id="PRO_0000167648" description="Terpredoxin reductase">
    <location>
        <begin position="1"/>
        <end position="409"/>
    </location>
</feature>
<feature type="binding site" evidence="1">
    <location>
        <begin position="7"/>
        <end position="38"/>
    </location>
    <ligand>
        <name>FAD</name>
        <dbReference type="ChEBI" id="CHEBI:57692"/>
    </ligand>
</feature>
<feature type="binding site" evidence="1">
    <location>
        <begin position="151"/>
        <end position="159"/>
    </location>
    <ligand>
        <name>NAD(+)</name>
        <dbReference type="ChEBI" id="CHEBI:57540"/>
    </ligand>
</feature>
<organism>
    <name type="scientific">Pseudomonas sp</name>
    <dbReference type="NCBI Taxonomy" id="306"/>
    <lineage>
        <taxon>Bacteria</taxon>
        <taxon>Pseudomonadati</taxon>
        <taxon>Pseudomonadota</taxon>
        <taxon>Gammaproteobacteria</taxon>
        <taxon>Pseudomonadales</taxon>
        <taxon>Pseudomonadaceae</taxon>
        <taxon>Pseudomonas</taxon>
    </lineage>
</organism>
<proteinExistence type="predicted"/>
<accession>P33009</accession>
<name>TERPA_PSESP</name>
<comment type="function">
    <text>The oxidation of alpha-terpineol by cytochrome p450-TERP requires the participation of a flavoprotein, terpredoxin reductase, and an iron-sulfur protein, terpredoxin, to mediate the transfer of electrons from NADH to P450 for oxygen activation.</text>
</comment>
<comment type="cofactor">
    <cofactor>
        <name>FAD</name>
        <dbReference type="ChEBI" id="CHEBI:57692"/>
    </cofactor>
</comment>
<gene>
    <name type="primary">terPA</name>
</gene>
<protein>
    <recommendedName>
        <fullName>Terpredoxin reductase</fullName>
        <ecNumber>1.18.1.-</ecNumber>
    </recommendedName>
</protein>
<reference key="1">
    <citation type="journal article" date="1992" name="J. Biol. Chem.">
        <title>Cytochrome P-450terp. Isolation and purification of the protein and cloning and sequencing of its operon.</title>
        <authorList>
            <person name="Peterson J.A."/>
            <person name="Lu J.-Y."/>
            <person name="Geisselsoder J."/>
            <person name="Graham-Lorence S."/>
            <person name="Carmona C."/>
            <person name="Witney F."/>
            <person name="Lorence M.C."/>
        </authorList>
    </citation>
    <scope>NUCLEOTIDE SEQUENCE [GENOMIC DNA]</scope>
</reference>
<evidence type="ECO:0000255" key="1"/>
<keyword id="KW-0274">FAD</keyword>
<keyword id="KW-0285">Flavoprotein</keyword>
<keyword id="KW-0520">NAD</keyword>
<keyword id="KW-0560">Oxidoreductase</keyword>
<dbReference type="EC" id="1.18.1.-"/>
<dbReference type="EMBL" id="M91440">
    <property type="protein sequence ID" value="AAA25997.1"/>
    <property type="molecule type" value="Genomic_DNA"/>
</dbReference>
<dbReference type="PIR" id="D42971">
    <property type="entry name" value="D42971"/>
</dbReference>
<dbReference type="SMR" id="P33009"/>
<dbReference type="GO" id="GO:0005737">
    <property type="term" value="C:cytoplasm"/>
    <property type="evidence" value="ECO:0007669"/>
    <property type="project" value="TreeGrafter"/>
</dbReference>
<dbReference type="GO" id="GO:0016651">
    <property type="term" value="F:oxidoreductase activity, acting on NAD(P)H"/>
    <property type="evidence" value="ECO:0007669"/>
    <property type="project" value="TreeGrafter"/>
</dbReference>
<dbReference type="Gene3D" id="3.30.390.30">
    <property type="match status" value="1"/>
</dbReference>
<dbReference type="Gene3D" id="3.50.50.60">
    <property type="entry name" value="FAD/NAD(P)-binding domain"/>
    <property type="match status" value="2"/>
</dbReference>
<dbReference type="InterPro" id="IPR050446">
    <property type="entry name" value="FAD-oxidoreductase/Apoptosis"/>
</dbReference>
<dbReference type="InterPro" id="IPR036188">
    <property type="entry name" value="FAD/NAD-bd_sf"/>
</dbReference>
<dbReference type="InterPro" id="IPR023753">
    <property type="entry name" value="FAD/NAD-binding_dom"/>
</dbReference>
<dbReference type="InterPro" id="IPR016156">
    <property type="entry name" value="FAD/NAD-linked_Rdtase_dimer_sf"/>
</dbReference>
<dbReference type="InterPro" id="IPR028202">
    <property type="entry name" value="Reductase_C"/>
</dbReference>
<dbReference type="PANTHER" id="PTHR43557">
    <property type="entry name" value="APOPTOSIS-INDUCING FACTOR 1"/>
    <property type="match status" value="1"/>
</dbReference>
<dbReference type="PANTHER" id="PTHR43557:SF2">
    <property type="entry name" value="RIESKE DOMAIN-CONTAINING PROTEIN-RELATED"/>
    <property type="match status" value="1"/>
</dbReference>
<dbReference type="Pfam" id="PF07992">
    <property type="entry name" value="Pyr_redox_2"/>
    <property type="match status" value="1"/>
</dbReference>
<dbReference type="Pfam" id="PF14759">
    <property type="entry name" value="Reductase_C"/>
    <property type="match status" value="1"/>
</dbReference>
<dbReference type="PRINTS" id="PR00368">
    <property type="entry name" value="FADPNR"/>
</dbReference>
<dbReference type="PRINTS" id="PR00411">
    <property type="entry name" value="PNDRDTASEI"/>
</dbReference>
<dbReference type="SUPFAM" id="SSF51905">
    <property type="entry name" value="FAD/NAD(P)-binding domain"/>
    <property type="match status" value="2"/>
</dbReference>
<dbReference type="SUPFAM" id="SSF55424">
    <property type="entry name" value="FAD/NAD-linked reductases, dimerisation (C-terminal) domain"/>
    <property type="match status" value="1"/>
</dbReference>
<sequence length="409" mass="44355">MGERRDTTVIVGAGHAGTAAAFFLREFGYHGRVLLLSAETQHPYQRPPLSKEYLLAQHSTPSLLKGKDSYARADIELCLQDDVLSITPASRQVKSSQGSYTYDHLILATGSHPRFMATLGQADNLCYLSDWDDAGRIRQQLGEASRIVVLGGGFIGLEIASSACKMGKHVTVIERAPRLLSRVVSEAFATFIGDIHLGNGIELRLGEEVREVRRCTSGVRVDAVFLSDGQLLECDMLVIGVGSEPRMELATAAGLACASGVLVDEHCHTSDPFISAIGDCVAVCPSPGHQLPRRESVQNATEQARLVAARLSGRPVPPVQTPWFWSDQLQARINLAGERPAQGQVIVRRYGGDKVSMLYLQDQQLVAIEACNMPGDCLLARRAIGQNHSLDLARLVDADVPLKDALHFA</sequence>